<accession>A0A193AU77</accession>
<comment type="function">
    <text evidence="4">Glucosyltransferase that catalyzes the formation of 1-O-beta-D-glucose esters with hydroxybenzoic acids and cinnamic acid including its derivatives as preferred glucosyl acceptors. Has significant activity with gallic acid (3,4,5-trihydroxybenzoic acid), 3,4-dihydroxybenzoic acid, 4-hydroxybenzoic acid, cinnamic acid, sinapic acid, coumaric acid, caffeic acid and ferulic acid in vitro. Gallic acid is the predicted native substrate of the enzyme, which thus catalyzes the formation of 1-O-galloyl-beta-D-glucose, the first committed step of hydrolyzable tannins (HTs) biosynthesis, with punicalagin isomers being the major HTs of pomegranate. Catalyzes the formation of flavonoid glucosides with genistein, apigenin and luteolin in vitro. Has low activity with benzoic acid, 2-hydroxybenzoic acid, 3-hydroxybenzoic acid, 2,4-dihydroxybenzoic acid, naringenin and quercetin. No activity with catechol, resveratrol, chlorogenic acid, catechin and epicatechin (building blocks of proanthocyanidins) or cyanidin, delphinidin and pelargonidin (the three anthocyanidins).</text>
</comment>
<comment type="catalytic activity">
    <reaction evidence="4">
        <text>3,4,5-trihydroxybenzoate + UDP-alpha-D-glucose = 1-O-galloyl-beta-D-glucose + UDP</text>
        <dbReference type="Rhea" id="RHEA:15249"/>
        <dbReference type="ChEBI" id="CHEBI:15834"/>
        <dbReference type="ChEBI" id="CHEBI:16918"/>
        <dbReference type="ChEBI" id="CHEBI:58223"/>
        <dbReference type="ChEBI" id="CHEBI:58885"/>
        <dbReference type="EC" id="2.4.1.136"/>
    </reaction>
</comment>
<comment type="catalytic activity">
    <reaction evidence="4">
        <text>3,4-dihydroxybenzoate + UDP-alpha-D-glucose = 1-O-(3,4-dihydroxy-benzoyl)-beta-D-glucose + UDP</text>
        <dbReference type="Rhea" id="RHEA:52844"/>
        <dbReference type="ChEBI" id="CHEBI:36241"/>
        <dbReference type="ChEBI" id="CHEBI:58223"/>
        <dbReference type="ChEBI" id="CHEBI:58885"/>
        <dbReference type="ChEBI" id="CHEBI:136876"/>
        <dbReference type="EC" id="2.4.1.136"/>
    </reaction>
</comment>
<comment type="catalytic activity">
    <reaction evidence="4">
        <text>4-hydroxybenzoate + UDP-alpha-D-glucose = 4-(beta-D-glucosyloxy)benzoate + UDP + H(+)</text>
        <dbReference type="Rhea" id="RHEA:15153"/>
        <dbReference type="ChEBI" id="CHEBI:11935"/>
        <dbReference type="ChEBI" id="CHEBI:15378"/>
        <dbReference type="ChEBI" id="CHEBI:17879"/>
        <dbReference type="ChEBI" id="CHEBI:58223"/>
        <dbReference type="ChEBI" id="CHEBI:58885"/>
        <dbReference type="EC" id="2.4.1.194"/>
    </reaction>
</comment>
<comment type="catalytic activity">
    <reaction evidence="4">
        <text>(E)-cinnamate + UDP-alpha-D-glucose = 1-O-(trans-cinnamoyl)-beta-D-glucose + UDP</text>
        <dbReference type="Rhea" id="RHEA:13437"/>
        <dbReference type="ChEBI" id="CHEBI:15669"/>
        <dbReference type="ChEBI" id="CHEBI:16279"/>
        <dbReference type="ChEBI" id="CHEBI:58223"/>
        <dbReference type="ChEBI" id="CHEBI:58885"/>
        <dbReference type="EC" id="2.4.1.177"/>
    </reaction>
</comment>
<comment type="catalytic activity">
    <reaction evidence="4">
        <text>(E)-sinapate + UDP-alpha-D-glucose = 1-O-(trans-sinapoyl)-beta-D-glucose + UDP</text>
        <dbReference type="Rhea" id="RHEA:13305"/>
        <dbReference type="ChEBI" id="CHEBI:16546"/>
        <dbReference type="ChEBI" id="CHEBI:30023"/>
        <dbReference type="ChEBI" id="CHEBI:58223"/>
        <dbReference type="ChEBI" id="CHEBI:58885"/>
        <dbReference type="EC" id="2.4.1.120"/>
    </reaction>
</comment>
<comment type="catalytic activity">
    <reaction evidence="4">
        <text>(E)-4-coumarate + UDP-alpha-D-glucose = 1-O-(trans-4-coumaroyl)-beta-D-glucose + UDP</text>
        <dbReference type="Rhea" id="RHEA:57472"/>
        <dbReference type="ChEBI" id="CHEBI:12876"/>
        <dbReference type="ChEBI" id="CHEBI:58223"/>
        <dbReference type="ChEBI" id="CHEBI:58885"/>
        <dbReference type="ChEBI" id="CHEBI:71498"/>
    </reaction>
</comment>
<comment type="catalytic activity">
    <reaction evidence="4">
        <text>(E)-caffeate + UDP-alpha-D-glucose = 1-O-[(E)-caffeoyl]-beta-D-glucose + UDP</text>
        <dbReference type="Rhea" id="RHEA:57464"/>
        <dbReference type="ChEBI" id="CHEBI:614"/>
        <dbReference type="ChEBI" id="CHEBI:57770"/>
        <dbReference type="ChEBI" id="CHEBI:58223"/>
        <dbReference type="ChEBI" id="CHEBI:58885"/>
    </reaction>
</comment>
<comment type="catalytic activity">
    <reaction evidence="4">
        <text>(E)-ferulate + UDP-alpha-D-glucose = 1-O-[(E)-feruloyl]-beta-D-glucose + UDP</text>
        <dbReference type="Rhea" id="RHEA:57468"/>
        <dbReference type="ChEBI" id="CHEBI:29749"/>
        <dbReference type="ChEBI" id="CHEBI:58223"/>
        <dbReference type="ChEBI" id="CHEBI:58885"/>
        <dbReference type="ChEBI" id="CHEBI:81321"/>
    </reaction>
</comment>
<comment type="catalytic activity">
    <reaction evidence="4">
        <text>genistein + UDP-alpha-D-glucose = genistein 7-O-beta-D-glucoside + UDP + H(+)</text>
        <dbReference type="Rhea" id="RHEA:56056"/>
        <dbReference type="ChEBI" id="CHEBI:15378"/>
        <dbReference type="ChEBI" id="CHEBI:58223"/>
        <dbReference type="ChEBI" id="CHEBI:58885"/>
        <dbReference type="ChEBI" id="CHEBI:74224"/>
        <dbReference type="ChEBI" id="CHEBI:140305"/>
        <dbReference type="EC" id="2.4.1.170"/>
    </reaction>
</comment>
<comment type="catalytic activity">
    <reaction evidence="4">
        <text>apigenin + UDP-alpha-D-glucose = apigenin 7-O-beta-D-glucoside + UDP + H(+)</text>
        <dbReference type="Rhea" id="RHEA:59760"/>
        <dbReference type="ChEBI" id="CHEBI:15378"/>
        <dbReference type="ChEBI" id="CHEBI:58223"/>
        <dbReference type="ChEBI" id="CHEBI:58470"/>
        <dbReference type="ChEBI" id="CHEBI:58885"/>
        <dbReference type="ChEBI" id="CHEBI:77722"/>
        <dbReference type="EC" id="2.4.1.81"/>
    </reaction>
</comment>
<comment type="catalytic activity">
    <reaction evidence="4">
        <text>luteolin + UDP-alpha-D-glucose = luteolin 7-O-beta-D-glucoside + UDP + H(+)</text>
        <dbReference type="Rhea" id="RHEA:19577"/>
        <dbReference type="ChEBI" id="CHEBI:15378"/>
        <dbReference type="ChEBI" id="CHEBI:57545"/>
        <dbReference type="ChEBI" id="CHEBI:58223"/>
        <dbReference type="ChEBI" id="CHEBI:58885"/>
        <dbReference type="ChEBI" id="CHEBI:77791"/>
        <dbReference type="EC" id="2.4.1.81"/>
    </reaction>
</comment>
<comment type="biophysicochemical properties">
    <kinetics>
        <KM evidence="4">0.98 mM for gallic acid (at pH 5.0 and 30 degrees Celsius)</KM>
        <KM evidence="4">1.17 mM for 4-hydroxybenzoic acid (at pH 5.0 and 30 degrees Celsius)</KM>
        <KM evidence="4">4.44 mM for 3,4-dihydroxybenzoic acid (at pH 5.0 and 30 degrees Celsius)</KM>
        <KM evidence="4">1.77 mM for caffeic acid (at pH 5.0 and 30 degrees Celsius)</KM>
        <KM evidence="4">0.86 mM for cinnamic acid (at pH 5.0 and 30 degrees Celsius)</KM>
        <KM evidence="4">1.06 mM for coumaric acid (at pH 5.0 and 30 degrees Celsius)</KM>
        <KM evidence="4">1.32 mM for ferulic acid (at pH 5.0 and 30 degrees Celsius)</KM>
        <KM evidence="4">0.78 mM for sinapic acid (at pH 5.0 and 30 degrees Celsius)</KM>
        <Vmax>0.39 uM/sec/mg enzyme with gallic acid as substrate (at pH 5.0 and 30 degrees Celsius)</Vmax>
        <Vmax>0.43 uM/sec/mg enzyme with 4-hydroxybenzoic acid as substrate (at pH 5.0 and 30 degrees Celsius)</Vmax>
        <Vmax>0.96 uM/sec/mg enzyme with 3,4-dihydroxybenzoic acid as substrate (at pH 5.0 and 30 degrees Celsius)</Vmax>
        <Vmax>0.63 uM/sec/mg enzyme with caffeic acid as substrate (at pH 5.0 and 30 degrees Celsius)</Vmax>
        <Vmax>0.32 uM/sec/mg enzyme with cinnamic acid as substrate (at pH 5.0 and 30 degrees Celsius)</Vmax>
        <Vmax>0.31 uM/sec/mg enzyme with coumaric acid as substrate (at pH 5.0 and 30 degrees Celsius)</Vmax>
        <Vmax>0.47 uM/sec/mg enzyme with ferulic acid as substrate (at pH 5.0 and 30 degrees Celsius)</Vmax>
        <Vmax>0.31 uM/sec/mg enzyme with sinapic acid as substrate (at pH 5.0 and 30 degrees Celsius)</Vmax>
        <text evidence="4">kcat is 0.55 sec(-1) with gallic acid as substrate. kcat is 0.6 sec(-1) with 4-hydroxybenzoic acid as substrate. kcat is 1.35 sec(-1) with 3,4-dihydroxybenzoic acid as substrate. kcat is 0.89 sec(-1) with caffeic acid as substrate. kcat is 0.45 sec(-1) with cinnamic acid as substrate. kcat is 0.44 sec(-1) with coumaric acid as substrate. kcat is 0.66 sec(-1) with ferulic acid as substrate. kcat is 0.44 sec(-1) with sinapic acid as substrate.</text>
    </kinetics>
    <phDependence>
        <text evidence="4">Optimum pH is 4.5.</text>
    </phDependence>
    <temperatureDependence>
        <text evidence="4">Activity remains fairly constant between 20-55 degrees Celsius. Active even at 0 degrees Celsius.</text>
    </temperatureDependence>
</comment>
<comment type="subcellular location">
    <subcellularLocation>
        <location evidence="4">Cytoplasm</location>
    </subcellularLocation>
</comment>
<comment type="tissue specificity">
    <text evidence="4">Highly expressed in leaf. Also expressed in peel, stem, root and aril.</text>
</comment>
<comment type="disruption phenotype">
    <text evidence="4">No difference in the levels of punicalagin in pomegranate hairy roots in a single RNAi knockdown of this gene. However, double RNAi knockdown of this gene together with UGT84A23 leads to significantly reduced levels of punicalagin and bis-hexahydroxydipheynyl glucose isomers, and to increased levels of galloyl glucosides (ether-linked gallic acid and glucose).</text>
</comment>
<comment type="similarity">
    <text evidence="3">Belongs to the UDP-glycosyltransferase family.</text>
</comment>
<protein>
    <recommendedName>
        <fullName evidence="6">Gallate 1-beta-glucosyltransferase 84A24</fullName>
        <ecNumber evidence="4">2.4.1.136</ecNumber>
    </recommendedName>
    <alternativeName>
        <fullName evidence="6">UDP-glucose:gallate glucosyltransferase</fullName>
    </alternativeName>
    <alternativeName>
        <fullName evidence="5">UDP-glycosyltransferase 84A24</fullName>
        <ecNumber evidence="4">2.4.1.120</ecNumber>
        <ecNumber evidence="4">2.4.1.170</ecNumber>
        <ecNumber evidence="4">2.4.1.177</ecNumber>
        <ecNumber evidence="4">2.4.1.194</ecNumber>
        <ecNumber evidence="4">2.4.1.81</ecNumber>
    </alternativeName>
</protein>
<reference evidence="7" key="1">
    <citation type="journal article" date="2016" name="PLoS ONE">
        <title>Two UGT84 Family Glycosyltransferases Catalyze a Critical Reaction of Hydrolyzable Tannin Biosynthesis in Pomegranate (Punica granatum).</title>
        <authorList>
            <person name="Ono N.N."/>
            <person name="Qin X."/>
            <person name="Wilson A.E."/>
            <person name="Li G."/>
            <person name="Tian L."/>
        </authorList>
    </citation>
    <scope>NUCLEOTIDE SEQUENCE [MRNA]</scope>
    <scope>FUNCTION</scope>
    <scope>CATALYTIC ACTIVITY</scope>
    <scope>BIOPHYSICOCHEMICAL PROPERTIES</scope>
    <scope>SUBSTRATE SPECIFICITY</scope>
    <scope>SUBCELLULAR LOCATION</scope>
    <scope>TISSUE SPECIFICITY</scope>
    <scope>DISRUPTION PHENOTYPE</scope>
</reference>
<reference evidence="8" key="2">
    <citation type="submission" date="2017-11" db="EMBL/GenBank/DDBJ databases">
        <title>De-novo sequencing of pomegranate (Punica granatum L.) genome.</title>
        <authorList>
            <person name="Akparov Z."/>
            <person name="Amiraslanov A."/>
            <person name="Hajiyeva S."/>
            <person name="Abbasov M."/>
            <person name="Kaur K."/>
            <person name="Hamwieh A."/>
            <person name="Solovyev V."/>
            <person name="Salamov A."/>
            <person name="Braich B."/>
            <person name="Kosarev P."/>
            <person name="Mahmoud A."/>
            <person name="Hajiyev E."/>
            <person name="Babayeva S."/>
            <person name="Izzatullayeva V."/>
            <person name="Mammadov A."/>
            <person name="Mammadov A."/>
            <person name="Sharifova S."/>
            <person name="Ojaghi J."/>
            <person name="Eynullazada K."/>
            <person name="Bayramov B."/>
            <person name="Abdulazimova A."/>
            <person name="Shahmuradov I."/>
        </authorList>
    </citation>
    <scope>NUCLEOTIDE SEQUENCE [LARGE SCALE GENOMIC DNA]</scope>
    <source>
        <strain>cv. AG2017</strain>
        <tissue evidence="8">Leaf</tissue>
    </source>
</reference>
<gene>
    <name evidence="5 7" type="primary">UGT84A24</name>
    <name evidence="8" type="ORF">CRG98_007995</name>
</gene>
<dbReference type="EC" id="2.4.1.136" evidence="4"/>
<dbReference type="EC" id="2.4.1.120" evidence="4"/>
<dbReference type="EC" id="2.4.1.170" evidence="4"/>
<dbReference type="EC" id="2.4.1.177" evidence="4"/>
<dbReference type="EC" id="2.4.1.194" evidence="4"/>
<dbReference type="EC" id="2.4.1.81" evidence="4"/>
<dbReference type="EMBL" id="KT159807">
    <property type="protein sequence ID" value="ANN02877.1"/>
    <property type="molecule type" value="mRNA"/>
</dbReference>
<dbReference type="EMBL" id="PGOL01000363">
    <property type="protein sequence ID" value="PKI71672.1"/>
    <property type="molecule type" value="Genomic_DNA"/>
</dbReference>
<dbReference type="SMR" id="A0A193AU77"/>
<dbReference type="STRING" id="22663.A0A193AU77"/>
<dbReference type="OrthoDB" id="5835829at2759"/>
<dbReference type="Proteomes" id="UP000233551">
    <property type="component" value="Unassembled WGS sequence"/>
</dbReference>
<dbReference type="Proteomes" id="UP000515151">
    <property type="component" value="Chromosome 4"/>
</dbReference>
<dbReference type="GO" id="GO:0005737">
    <property type="term" value="C:cytoplasm"/>
    <property type="evidence" value="ECO:0000314"/>
    <property type="project" value="UniProtKB"/>
</dbReference>
<dbReference type="GO" id="GO:0047250">
    <property type="term" value="F:4-hydroxybenzoate 4-O-beta-D-glucosyltransferase activity"/>
    <property type="evidence" value="ECO:0007669"/>
    <property type="project" value="UniProtKB-EC"/>
</dbReference>
<dbReference type="GO" id="GO:0050412">
    <property type="term" value="F:cinnamate beta-D-glucosyltransferase activity"/>
    <property type="evidence" value="ECO:0000314"/>
    <property type="project" value="UniProtKB"/>
</dbReference>
<dbReference type="GO" id="GO:0047891">
    <property type="term" value="F:flavone 7-O-beta-glucosyltransferase activity"/>
    <property type="evidence" value="ECO:0000314"/>
    <property type="project" value="UniProtKB"/>
</dbReference>
<dbReference type="GO" id="GO:0047913">
    <property type="term" value="F:gallate 1-beta-glucosyltransferase activity"/>
    <property type="evidence" value="ECO:0000314"/>
    <property type="project" value="UniProtKB"/>
</dbReference>
<dbReference type="GO" id="GO:0050004">
    <property type="term" value="F:isoflavone 7-O-glucosyltransferase activity"/>
    <property type="evidence" value="ECO:0007669"/>
    <property type="project" value="UniProtKB-EC"/>
</dbReference>
<dbReference type="GO" id="GO:0080043">
    <property type="term" value="F:quercetin 3-O-glucosyltransferase activity"/>
    <property type="evidence" value="ECO:0007669"/>
    <property type="project" value="TreeGrafter"/>
</dbReference>
<dbReference type="GO" id="GO:0080044">
    <property type="term" value="F:quercetin 7-O-glucosyltransferase activity"/>
    <property type="evidence" value="ECO:0007669"/>
    <property type="project" value="TreeGrafter"/>
</dbReference>
<dbReference type="GO" id="GO:0050284">
    <property type="term" value="F:sinapate 1-glucosyltransferase activity"/>
    <property type="evidence" value="ECO:0000314"/>
    <property type="project" value="UniProtKB"/>
</dbReference>
<dbReference type="GO" id="GO:0035251">
    <property type="term" value="F:UDP-glucosyltransferase activity"/>
    <property type="evidence" value="ECO:0000314"/>
    <property type="project" value="UniProtKB"/>
</dbReference>
<dbReference type="GO" id="GO:0046278">
    <property type="term" value="P:3,4-dihydroxybenzoate metabolic process"/>
    <property type="evidence" value="ECO:0000314"/>
    <property type="project" value="UniProtKB"/>
</dbReference>
<dbReference type="GO" id="GO:0009801">
    <property type="term" value="P:cinnamic acid ester metabolic process"/>
    <property type="evidence" value="ECO:0000314"/>
    <property type="project" value="UniProtKB"/>
</dbReference>
<dbReference type="GO" id="GO:0033494">
    <property type="term" value="P:ferulate metabolic process"/>
    <property type="evidence" value="ECO:0000314"/>
    <property type="project" value="UniProtKB"/>
</dbReference>
<dbReference type="CDD" id="cd03784">
    <property type="entry name" value="GT1_Gtf-like"/>
    <property type="match status" value="1"/>
</dbReference>
<dbReference type="FunFam" id="3.40.50.2000:FF:000019">
    <property type="entry name" value="Glycosyltransferase"/>
    <property type="match status" value="1"/>
</dbReference>
<dbReference type="FunFam" id="3.40.50.2000:FF:000101">
    <property type="entry name" value="Glycosyltransferase"/>
    <property type="match status" value="1"/>
</dbReference>
<dbReference type="Gene3D" id="3.40.50.2000">
    <property type="entry name" value="Glycogen Phosphorylase B"/>
    <property type="match status" value="2"/>
</dbReference>
<dbReference type="InterPro" id="IPR002213">
    <property type="entry name" value="UDP_glucos_trans"/>
</dbReference>
<dbReference type="InterPro" id="IPR035595">
    <property type="entry name" value="UDP_glycos_trans_CS"/>
</dbReference>
<dbReference type="PANTHER" id="PTHR11926">
    <property type="entry name" value="GLUCOSYL/GLUCURONOSYL TRANSFERASES"/>
    <property type="match status" value="1"/>
</dbReference>
<dbReference type="PANTHER" id="PTHR11926:SF986">
    <property type="entry name" value="UDP-GLYCOSYLTRANSFERASE 84A1"/>
    <property type="match status" value="1"/>
</dbReference>
<dbReference type="Pfam" id="PF00201">
    <property type="entry name" value="UDPGT"/>
    <property type="match status" value="1"/>
</dbReference>
<dbReference type="SUPFAM" id="SSF53756">
    <property type="entry name" value="UDP-Glycosyltransferase/glycogen phosphorylase"/>
    <property type="match status" value="1"/>
</dbReference>
<dbReference type="PROSITE" id="PS00375">
    <property type="entry name" value="UDPGT"/>
    <property type="match status" value="1"/>
</dbReference>
<proteinExistence type="evidence at protein level"/>
<feature type="chain" id="PRO_0000452359" description="Gallate 1-beta-glucosyltransferase 84A24">
    <location>
        <begin position="1"/>
        <end position="517"/>
    </location>
</feature>
<feature type="active site" description="Proton acceptor" evidence="1">
    <location>
        <position position="19"/>
    </location>
</feature>
<feature type="binding site" evidence="2">
    <location>
        <position position="19"/>
    </location>
    <ligand>
        <name>an anthocyanidin</name>
        <dbReference type="ChEBI" id="CHEBI:143576"/>
    </ligand>
</feature>
<feature type="binding site" evidence="1">
    <location>
        <position position="344"/>
    </location>
    <ligand>
        <name>UDP-alpha-D-glucose</name>
        <dbReference type="ChEBI" id="CHEBI:58885"/>
    </ligand>
</feature>
<feature type="binding site" evidence="1">
    <location>
        <position position="359"/>
    </location>
    <ligand>
        <name>UDP-alpha-D-glucose</name>
        <dbReference type="ChEBI" id="CHEBI:58885"/>
    </ligand>
</feature>
<feature type="binding site" evidence="1">
    <location>
        <position position="362"/>
    </location>
    <ligand>
        <name>UDP-alpha-D-glucose</name>
        <dbReference type="ChEBI" id="CHEBI:58885"/>
    </ligand>
</feature>
<feature type="binding site" evidence="1">
    <location>
        <position position="363"/>
    </location>
    <ligand>
        <name>UDP-alpha-D-glucose</name>
        <dbReference type="ChEBI" id="CHEBI:58885"/>
    </ligand>
</feature>
<feature type="binding site" evidence="1">
    <location>
        <position position="364"/>
    </location>
    <ligand>
        <name>UDP-alpha-D-glucose</name>
        <dbReference type="ChEBI" id="CHEBI:58885"/>
    </ligand>
</feature>
<feature type="binding site" evidence="1">
    <location>
        <position position="367"/>
    </location>
    <ligand>
        <name>UDP-alpha-D-glucose</name>
        <dbReference type="ChEBI" id="CHEBI:58885"/>
    </ligand>
</feature>
<feature type="binding site" evidence="2">
    <location>
        <position position="382"/>
    </location>
    <ligand>
        <name>an anthocyanidin</name>
        <dbReference type="ChEBI" id="CHEBI:143576"/>
    </ligand>
</feature>
<feature type="binding site" evidence="1">
    <location>
        <position position="383"/>
    </location>
    <ligand>
        <name>UDP-alpha-D-glucose</name>
        <dbReference type="ChEBI" id="CHEBI:58885"/>
    </ligand>
</feature>
<feature type="binding site" evidence="1">
    <location>
        <position position="384"/>
    </location>
    <ligand>
        <name>UDP-alpha-D-glucose</name>
        <dbReference type="ChEBI" id="CHEBI:58885"/>
    </ligand>
</feature>
<name>GGT24_PUNGR</name>
<organism evidence="7">
    <name type="scientific">Punica granatum</name>
    <name type="common">Pomegranate</name>
    <dbReference type="NCBI Taxonomy" id="22663"/>
    <lineage>
        <taxon>Eukaryota</taxon>
        <taxon>Viridiplantae</taxon>
        <taxon>Streptophyta</taxon>
        <taxon>Embryophyta</taxon>
        <taxon>Tracheophyta</taxon>
        <taxon>Spermatophyta</taxon>
        <taxon>Magnoliopsida</taxon>
        <taxon>eudicotyledons</taxon>
        <taxon>Gunneridae</taxon>
        <taxon>Pentapetalae</taxon>
        <taxon>rosids</taxon>
        <taxon>malvids</taxon>
        <taxon>Myrtales</taxon>
        <taxon>Lythraceae</taxon>
        <taxon>Punica</taxon>
    </lineage>
</organism>
<evidence type="ECO:0000250" key="1">
    <source>
        <dbReference type="UniProtKB" id="A0A0A1HA03"/>
    </source>
</evidence>
<evidence type="ECO:0000250" key="2">
    <source>
        <dbReference type="UniProtKB" id="P51094"/>
    </source>
</evidence>
<evidence type="ECO:0000255" key="3">
    <source>
        <dbReference type="RuleBase" id="RU003718"/>
    </source>
</evidence>
<evidence type="ECO:0000269" key="4">
    <source>
    </source>
</evidence>
<evidence type="ECO:0000303" key="5">
    <source>
    </source>
</evidence>
<evidence type="ECO:0000305" key="6"/>
<evidence type="ECO:0000312" key="7">
    <source>
        <dbReference type="EMBL" id="ANN02877.1"/>
    </source>
</evidence>
<evidence type="ECO:0000312" key="8">
    <source>
        <dbReference type="EMBL" id="PKI71672.1"/>
    </source>
</evidence>
<keyword id="KW-0963">Cytoplasm</keyword>
<keyword id="KW-0328">Glycosyltransferase</keyword>
<keyword id="KW-1185">Reference proteome</keyword>
<keyword id="KW-0808">Transferase</keyword>
<sequence>MGSESLVHVFLVSFPGQGHVNPLLRLGKRLASKGLLVTFTTPESIGKQMRKASNIGEEPSPIGDGFIRFEFFEDGWDEDEPRRQDLDQYLPQLEKVGKEVIPRMIKKNEEQNRPVSCLINNPFIPWVSDVAESLGLPSAMLWVQSCACFAAYYHYYHGLVPFPSESAMEIDVQLPCMPLLKHDEVPSFLYPTTPYPFLRRAIMGQYKNLDKPFCVLMDTFQELEHEIIEYMSKICPIKTVGPLFKNPKAPNANVRGDFMKADDCISWLDSKPPASVVYVSFGSVVYLKQDQWDEIAFGLLNSGLNFLWVMKPPHKDSGYQLLTLPEGFLEKAGDKGKVVQWSPQEQVLAHPSVACFVTHCGWNSSMEALSSGMPVVAFPQWGDQVTDAKYLVDVFKVGVRMCRGEAENKLIMRDVVEKCLLEATVGPKAAEVKENALKWKAAAEAAVAEGGSSDRNIQAFVDEVKRRSIAIQSNKSEPKPVVQNAAVADHFGAKATTNGVAADLAGSNADGKVELVA</sequence>